<accession>P65431</accession>
<accession>Q48XD9</accession>
<accession>Q99YJ9</accession>
<evidence type="ECO:0000255" key="1">
    <source>
        <dbReference type="HAMAP-Rule" id="MF_01007"/>
    </source>
</evidence>
<evidence type="ECO:0000305" key="2"/>
<proteinExistence type="inferred from homology"/>
<comment type="function">
    <text evidence="1">Specifically methylates the N4 position of cytidine in position 1402 (C1402) of 16S rRNA.</text>
</comment>
<comment type="catalytic activity">
    <reaction evidence="1">
        <text>cytidine(1402) in 16S rRNA + S-adenosyl-L-methionine = N(4)-methylcytidine(1402) in 16S rRNA + S-adenosyl-L-homocysteine + H(+)</text>
        <dbReference type="Rhea" id="RHEA:42928"/>
        <dbReference type="Rhea" id="RHEA-COMP:10286"/>
        <dbReference type="Rhea" id="RHEA-COMP:10287"/>
        <dbReference type="ChEBI" id="CHEBI:15378"/>
        <dbReference type="ChEBI" id="CHEBI:57856"/>
        <dbReference type="ChEBI" id="CHEBI:59789"/>
        <dbReference type="ChEBI" id="CHEBI:74506"/>
        <dbReference type="ChEBI" id="CHEBI:82748"/>
        <dbReference type="EC" id="2.1.1.199"/>
    </reaction>
</comment>
<comment type="subcellular location">
    <subcellularLocation>
        <location evidence="1">Cytoplasm</location>
    </subcellularLocation>
</comment>
<comment type="similarity">
    <text evidence="1">Belongs to the methyltransferase superfamily. RsmH family.</text>
</comment>
<comment type="sequence caution" evidence="2">
    <conflict type="erroneous initiation">
        <sequence resource="EMBL-CDS" id="AAK34428"/>
    </conflict>
</comment>
<comment type="sequence caution" evidence="2">
    <conflict type="erroneous initiation">
        <sequence resource="EMBL-CDS" id="AAZ51986"/>
    </conflict>
</comment>
<name>RSMH_STRP1</name>
<protein>
    <recommendedName>
        <fullName evidence="1">Ribosomal RNA small subunit methyltransferase H</fullName>
        <ecNumber evidence="1">2.1.1.199</ecNumber>
    </recommendedName>
    <alternativeName>
        <fullName evidence="1">16S rRNA m(4)C1402 methyltransferase</fullName>
    </alternativeName>
    <alternativeName>
        <fullName evidence="1">rRNA (cytosine-N(4)-)-methyltransferase RsmH</fullName>
    </alternativeName>
</protein>
<reference key="1">
    <citation type="journal article" date="2001" name="Proc. Natl. Acad. Sci. U.S.A.">
        <title>Complete genome sequence of an M1 strain of Streptococcus pyogenes.</title>
        <authorList>
            <person name="Ferretti J.J."/>
            <person name="McShan W.M."/>
            <person name="Ajdic D.J."/>
            <person name="Savic D.J."/>
            <person name="Savic G."/>
            <person name="Lyon K."/>
            <person name="Primeaux C."/>
            <person name="Sezate S."/>
            <person name="Suvorov A.N."/>
            <person name="Kenton S."/>
            <person name="Lai H.S."/>
            <person name="Lin S.P."/>
            <person name="Qian Y."/>
            <person name="Jia H.G."/>
            <person name="Najar F.Z."/>
            <person name="Ren Q."/>
            <person name="Zhu H."/>
            <person name="Song L."/>
            <person name="White J."/>
            <person name="Yuan X."/>
            <person name="Clifton S.W."/>
            <person name="Roe B.A."/>
            <person name="McLaughlin R.E."/>
        </authorList>
    </citation>
    <scope>NUCLEOTIDE SEQUENCE [LARGE SCALE GENOMIC DNA]</scope>
    <source>
        <strain>ATCC 700294 / SF370 / Serotype M1</strain>
    </source>
</reference>
<reference key="2">
    <citation type="journal article" date="2005" name="J. Infect. Dis.">
        <title>Evolutionary origin and emergence of a highly successful clone of serotype M1 group A Streptococcus involved multiple horizontal gene transfer events.</title>
        <authorList>
            <person name="Sumby P."/>
            <person name="Porcella S.F."/>
            <person name="Madrigal A.G."/>
            <person name="Barbian K.D."/>
            <person name="Virtaneva K."/>
            <person name="Ricklefs S.M."/>
            <person name="Sturdevant D.E."/>
            <person name="Graham M.R."/>
            <person name="Vuopio-Varkila J."/>
            <person name="Hoe N.P."/>
            <person name="Musser J.M."/>
        </authorList>
    </citation>
    <scope>NUCLEOTIDE SEQUENCE [LARGE SCALE GENOMIC DNA]</scope>
    <source>
        <strain>ATCC BAA-947 / MGAS5005 / Serotype M1</strain>
    </source>
</reference>
<keyword id="KW-0963">Cytoplasm</keyword>
<keyword id="KW-0489">Methyltransferase</keyword>
<keyword id="KW-1185">Reference proteome</keyword>
<keyword id="KW-0698">rRNA processing</keyword>
<keyword id="KW-0949">S-adenosyl-L-methionine</keyword>
<keyword id="KW-0808">Transferase</keyword>
<dbReference type="EC" id="2.1.1.199" evidence="1"/>
<dbReference type="EMBL" id="AE004092">
    <property type="protein sequence ID" value="AAK34428.1"/>
    <property type="status" value="ALT_INIT"/>
    <property type="molecule type" value="Genomic_DNA"/>
</dbReference>
<dbReference type="EMBL" id="CP000017">
    <property type="protein sequence ID" value="AAZ51986.1"/>
    <property type="status" value="ALT_INIT"/>
    <property type="molecule type" value="Genomic_DNA"/>
</dbReference>
<dbReference type="RefSeq" id="NP_269707.1">
    <property type="nucleotide sequence ID" value="NC_002737.2"/>
</dbReference>
<dbReference type="SMR" id="P65431"/>
<dbReference type="PaxDb" id="1314-HKU360_01419"/>
<dbReference type="KEGG" id="spy:SPy_1666"/>
<dbReference type="KEGG" id="spz:M5005_Spy1368"/>
<dbReference type="PATRIC" id="fig|160490.10.peg.1451"/>
<dbReference type="HOGENOM" id="CLU_038422_2_0_9"/>
<dbReference type="OMA" id="NPAKRTF"/>
<dbReference type="Proteomes" id="UP000000750">
    <property type="component" value="Chromosome"/>
</dbReference>
<dbReference type="GO" id="GO:0005737">
    <property type="term" value="C:cytoplasm"/>
    <property type="evidence" value="ECO:0007669"/>
    <property type="project" value="UniProtKB-SubCell"/>
</dbReference>
<dbReference type="GO" id="GO:0071424">
    <property type="term" value="F:rRNA (cytosine-N4-)-methyltransferase activity"/>
    <property type="evidence" value="ECO:0007669"/>
    <property type="project" value="UniProtKB-UniRule"/>
</dbReference>
<dbReference type="GO" id="GO:0070475">
    <property type="term" value="P:rRNA base methylation"/>
    <property type="evidence" value="ECO:0007669"/>
    <property type="project" value="UniProtKB-UniRule"/>
</dbReference>
<dbReference type="FunFam" id="1.10.150.170:FF:000001">
    <property type="entry name" value="Ribosomal RNA small subunit methyltransferase H"/>
    <property type="match status" value="1"/>
</dbReference>
<dbReference type="Gene3D" id="1.10.150.170">
    <property type="entry name" value="Putative methyltransferase TM0872, insert domain"/>
    <property type="match status" value="1"/>
</dbReference>
<dbReference type="Gene3D" id="3.40.50.150">
    <property type="entry name" value="Vaccinia Virus protein VP39"/>
    <property type="match status" value="1"/>
</dbReference>
<dbReference type="HAMAP" id="MF_01007">
    <property type="entry name" value="16SrRNA_methyltr_H"/>
    <property type="match status" value="1"/>
</dbReference>
<dbReference type="InterPro" id="IPR002903">
    <property type="entry name" value="RsmH"/>
</dbReference>
<dbReference type="InterPro" id="IPR023397">
    <property type="entry name" value="SAM-dep_MeTrfase_MraW_recog"/>
</dbReference>
<dbReference type="InterPro" id="IPR029063">
    <property type="entry name" value="SAM-dependent_MTases_sf"/>
</dbReference>
<dbReference type="NCBIfam" id="TIGR00006">
    <property type="entry name" value="16S rRNA (cytosine(1402)-N(4))-methyltransferase RsmH"/>
    <property type="match status" value="1"/>
</dbReference>
<dbReference type="PANTHER" id="PTHR11265:SF0">
    <property type="entry name" value="12S RRNA N4-METHYLCYTIDINE METHYLTRANSFERASE"/>
    <property type="match status" value="1"/>
</dbReference>
<dbReference type="PANTHER" id="PTHR11265">
    <property type="entry name" value="S-ADENOSYL-METHYLTRANSFERASE MRAW"/>
    <property type="match status" value="1"/>
</dbReference>
<dbReference type="Pfam" id="PF01795">
    <property type="entry name" value="Methyltransf_5"/>
    <property type="match status" value="1"/>
</dbReference>
<dbReference type="PIRSF" id="PIRSF004486">
    <property type="entry name" value="MraW"/>
    <property type="match status" value="1"/>
</dbReference>
<dbReference type="SUPFAM" id="SSF81799">
    <property type="entry name" value="Putative methyltransferase TM0872, insert domain"/>
    <property type="match status" value="1"/>
</dbReference>
<dbReference type="SUPFAM" id="SSF53335">
    <property type="entry name" value="S-adenosyl-L-methionine-dependent methyltransferases"/>
    <property type="match status" value="1"/>
</dbReference>
<gene>
    <name evidence="1" type="primary">rsmH</name>
    <name type="synonym">mraW</name>
    <name type="ordered locus">SPy_1666</name>
    <name type="ordered locus">M5005_Spy1368</name>
</gene>
<sequence>MTKEFHHVTVLLHETVDMLDIKPDGIYVDATLGGSGHSAYLLSKLGEEGHLYCFDQDQKAIDNAQVTLKSYIDKGQVTFIKDNFRHLKARLTALGVDEIDGILYDLGVSSPQLDERERGFSYKQDAPLDMRMDRQSLLTAYEVVNTYPFNDLVKIFFKYGEDKFSKQIARKIEQARAIKPIETTTELAELIKAAKPAKELKKKGHPAKQIFQAIRIEVNDELGAADESIQDAMELLALDGRISVITFHSLEDRLTKQLFKEASTVDVPKGLPLIPEDMKPKFELVSRKPILPSHSELTANKRAHSAKLRVAKKIRK</sequence>
<feature type="chain" id="PRO_0000108721" description="Ribosomal RNA small subunit methyltransferase H">
    <location>
        <begin position="1"/>
        <end position="316"/>
    </location>
</feature>
<feature type="binding site" evidence="1">
    <location>
        <begin position="35"/>
        <end position="37"/>
    </location>
    <ligand>
        <name>S-adenosyl-L-methionine</name>
        <dbReference type="ChEBI" id="CHEBI:59789"/>
    </ligand>
</feature>
<feature type="binding site" evidence="1">
    <location>
        <position position="55"/>
    </location>
    <ligand>
        <name>S-adenosyl-L-methionine</name>
        <dbReference type="ChEBI" id="CHEBI:59789"/>
    </ligand>
</feature>
<feature type="binding site" evidence="1">
    <location>
        <position position="84"/>
    </location>
    <ligand>
        <name>S-adenosyl-L-methionine</name>
        <dbReference type="ChEBI" id="CHEBI:59789"/>
    </ligand>
</feature>
<feature type="binding site" evidence="1">
    <location>
        <position position="105"/>
    </location>
    <ligand>
        <name>S-adenosyl-L-methionine</name>
        <dbReference type="ChEBI" id="CHEBI:59789"/>
    </ligand>
</feature>
<feature type="binding site" evidence="1">
    <location>
        <position position="112"/>
    </location>
    <ligand>
        <name>S-adenosyl-L-methionine</name>
        <dbReference type="ChEBI" id="CHEBI:59789"/>
    </ligand>
</feature>
<organism>
    <name type="scientific">Streptococcus pyogenes serotype M1</name>
    <dbReference type="NCBI Taxonomy" id="301447"/>
    <lineage>
        <taxon>Bacteria</taxon>
        <taxon>Bacillati</taxon>
        <taxon>Bacillota</taxon>
        <taxon>Bacilli</taxon>
        <taxon>Lactobacillales</taxon>
        <taxon>Streptococcaceae</taxon>
        <taxon>Streptococcus</taxon>
    </lineage>
</organism>